<organism>
    <name type="scientific">Danio rerio</name>
    <name type="common">Zebrafish</name>
    <name type="synonym">Brachydanio rerio</name>
    <dbReference type="NCBI Taxonomy" id="7955"/>
    <lineage>
        <taxon>Eukaryota</taxon>
        <taxon>Metazoa</taxon>
        <taxon>Chordata</taxon>
        <taxon>Craniata</taxon>
        <taxon>Vertebrata</taxon>
        <taxon>Euteleostomi</taxon>
        <taxon>Actinopterygii</taxon>
        <taxon>Neopterygii</taxon>
        <taxon>Teleostei</taxon>
        <taxon>Ostariophysi</taxon>
        <taxon>Cypriniformes</taxon>
        <taxon>Danionidae</taxon>
        <taxon>Danioninae</taxon>
        <taxon>Danio</taxon>
    </lineage>
</organism>
<name>BORE1_DANRE</name>
<protein>
    <recommendedName>
        <fullName>Borealin</fullName>
    </recommendedName>
    <alternativeName>
        <fullName>Cell division cycle-associated protein 8</fullName>
    </alternativeName>
    <alternativeName>
        <fullName>Dasra-B</fullName>
        <shortName>DasraB</shortName>
        <shortName>DrDasraB</shortName>
    </alternativeName>
</protein>
<proteinExistence type="evidence at transcript level"/>
<sequence>MAPRKRTQNAKSKKNPKAPKLEAFLLDFDDEVHTIVERLKEKTNNLLKDADNLYKTALIKLPMAVRKMNWIEYCNLEKPKSPVDDSKVREEAAQVELAIAGNHTIPKVAAKEAKSSANSEDENMAPLKSTMKKKKASKKAPSTSKKPRTLSISKQGGTIQRTTRKPLITPARSFLDSSIIGATPLITPRFDPRLPKTPALRSALHREKVYSMSVNGSPLSAGGEDIVISVPIGNGECIQLLASEMDSVDLSQLDEKALRSIRNLQNRLTTLCGSSK</sequence>
<feature type="chain" id="PRO_0000247079" description="Borealin">
    <location>
        <begin position="1"/>
        <end position="276"/>
    </location>
</feature>
<feature type="region of interest" description="Disordered" evidence="2">
    <location>
        <begin position="111"/>
        <end position="158"/>
    </location>
</feature>
<feature type="sequence conflict" description="In Ref. 1; AAV28474." evidence="3" ref="1">
    <original>T</original>
    <variation>A</variation>
    <location>
        <position position="149"/>
    </location>
</feature>
<dbReference type="EMBL" id="AY751743">
    <property type="protein sequence ID" value="AAV28474.1"/>
    <property type="molecule type" value="mRNA"/>
</dbReference>
<dbReference type="EMBL" id="BC085383">
    <property type="protein sequence ID" value="AAH85383.1"/>
    <property type="molecule type" value="mRNA"/>
</dbReference>
<dbReference type="RefSeq" id="NP_001007457.1">
    <property type="nucleotide sequence ID" value="NM_001007456.1"/>
</dbReference>
<dbReference type="SMR" id="Q5XLR4"/>
<dbReference type="FunCoup" id="Q5XLR4">
    <property type="interactions" value="1852"/>
</dbReference>
<dbReference type="STRING" id="7955.ENSDARP00000143774"/>
<dbReference type="PaxDb" id="7955-ENSDARP00000063336"/>
<dbReference type="GeneID" id="492815"/>
<dbReference type="KEGG" id="dre:492815"/>
<dbReference type="AGR" id="ZFIN:ZDB-GENE-041114-171"/>
<dbReference type="CTD" id="55143"/>
<dbReference type="ZFIN" id="ZDB-GENE-041114-171">
    <property type="gene designation" value="cdca8"/>
</dbReference>
<dbReference type="eggNOG" id="ENOG502QS4S">
    <property type="taxonomic scope" value="Eukaryota"/>
</dbReference>
<dbReference type="InParanoid" id="Q5XLR4"/>
<dbReference type="OrthoDB" id="6360905at2759"/>
<dbReference type="PhylomeDB" id="Q5XLR4"/>
<dbReference type="PRO" id="PR:Q5XLR4"/>
<dbReference type="Proteomes" id="UP000000437">
    <property type="component" value="Chromosome 19"/>
</dbReference>
<dbReference type="GO" id="GO:0032133">
    <property type="term" value="C:chromosome passenger complex"/>
    <property type="evidence" value="ECO:0000250"/>
    <property type="project" value="UniProtKB"/>
</dbReference>
<dbReference type="GO" id="GO:0000775">
    <property type="term" value="C:chromosome, centromeric region"/>
    <property type="evidence" value="ECO:0000318"/>
    <property type="project" value="GO_Central"/>
</dbReference>
<dbReference type="GO" id="GO:0005737">
    <property type="term" value="C:cytoplasm"/>
    <property type="evidence" value="ECO:0007669"/>
    <property type="project" value="UniProtKB-KW"/>
</dbReference>
<dbReference type="GO" id="GO:0005634">
    <property type="term" value="C:nucleus"/>
    <property type="evidence" value="ECO:0007669"/>
    <property type="project" value="UniProtKB-SubCell"/>
</dbReference>
<dbReference type="GO" id="GO:0051233">
    <property type="term" value="C:spindle midzone"/>
    <property type="evidence" value="ECO:0000318"/>
    <property type="project" value="GO_Central"/>
</dbReference>
<dbReference type="GO" id="GO:0051301">
    <property type="term" value="P:cell division"/>
    <property type="evidence" value="ECO:0007669"/>
    <property type="project" value="UniProtKB-KW"/>
</dbReference>
<dbReference type="GO" id="GO:0007507">
    <property type="term" value="P:heart development"/>
    <property type="evidence" value="ECO:0000315"/>
    <property type="project" value="ZFIN"/>
</dbReference>
<dbReference type="GO" id="GO:0000070">
    <property type="term" value="P:mitotic sister chromatid segregation"/>
    <property type="evidence" value="ECO:0000318"/>
    <property type="project" value="GO_Central"/>
</dbReference>
<dbReference type="Gene3D" id="6.10.140.560">
    <property type="match status" value="1"/>
</dbReference>
<dbReference type="Gene3D" id="6.10.250.1900">
    <property type="match status" value="1"/>
</dbReference>
<dbReference type="InterPro" id="IPR046466">
    <property type="entry name" value="Borealin_C"/>
</dbReference>
<dbReference type="InterPro" id="IPR018851">
    <property type="entry name" value="Borealin_N"/>
</dbReference>
<dbReference type="InterPro" id="IPR018867">
    <property type="entry name" value="Cell_div_borealin"/>
</dbReference>
<dbReference type="PANTHER" id="PTHR16040">
    <property type="entry name" value="AUSTRALIN, ISOFORM A-RELATED"/>
    <property type="match status" value="1"/>
</dbReference>
<dbReference type="PANTHER" id="PTHR16040:SF8">
    <property type="entry name" value="BOREALIN"/>
    <property type="match status" value="1"/>
</dbReference>
<dbReference type="Pfam" id="PF10512">
    <property type="entry name" value="Borealin"/>
    <property type="match status" value="1"/>
</dbReference>
<dbReference type="Pfam" id="PF10444">
    <property type="entry name" value="Nbl1_Borealin_N"/>
    <property type="match status" value="1"/>
</dbReference>
<evidence type="ECO:0000250" key="1"/>
<evidence type="ECO:0000256" key="2">
    <source>
        <dbReference type="SAM" id="MobiDB-lite"/>
    </source>
</evidence>
<evidence type="ECO:0000305" key="3"/>
<accession>Q5XLR4</accession>
<accession>Q5U3V2</accession>
<gene>
    <name type="primary">cdca8</name>
    <name type="synonym">cdca8l</name>
    <name type="ORF">zgc:101607</name>
</gene>
<reference key="1">
    <citation type="journal article" date="2004" name="Proc. Natl. Acad. Sci. U.S.A.">
        <title>Identification of 315 genes essential for early zebrafish development.</title>
        <authorList>
            <person name="Amsterdam A."/>
            <person name="Nissen R.M."/>
            <person name="Sun Z."/>
            <person name="Swindell E.C."/>
            <person name="Farrington S."/>
            <person name="Hopkins N."/>
        </authorList>
    </citation>
    <scope>NUCLEOTIDE SEQUENCE [LARGE SCALE MRNA]</scope>
</reference>
<reference key="2">
    <citation type="submission" date="2004-11" db="EMBL/GenBank/DDBJ databases">
        <authorList>
            <consortium name="NIH - Zebrafish Gene Collection (ZGC) project"/>
        </authorList>
    </citation>
    <scope>NUCLEOTIDE SEQUENCE [LARGE SCALE MRNA]</scope>
    <source>
        <tissue>Embryo</tissue>
    </source>
</reference>
<reference key="3">
    <citation type="journal article" date="2004" name="Cell">
        <title>The chromosomal passenger complex is required for chromatin-induced microtubule stabilization and spindle assembly.</title>
        <authorList>
            <person name="Sampath S.C."/>
            <person name="Ohi R."/>
            <person name="Leismann O."/>
            <person name="Salic A."/>
            <person name="Pozniakovski A."/>
            <person name="Funabiki H."/>
        </authorList>
    </citation>
    <scope>IDENTIFICATION</scope>
</reference>
<keyword id="KW-0131">Cell cycle</keyword>
<keyword id="KW-0132">Cell division</keyword>
<keyword id="KW-0137">Centromere</keyword>
<keyword id="KW-0158">Chromosome</keyword>
<keyword id="KW-0963">Cytoplasm</keyword>
<keyword id="KW-0206">Cytoskeleton</keyword>
<keyword id="KW-0498">Mitosis</keyword>
<keyword id="KW-0539">Nucleus</keyword>
<keyword id="KW-1185">Reference proteome</keyword>
<comment type="function">
    <text evidence="1">Component of the chromosomal passenger complex (CPC), a complex that acts as a key regulator of mitosis. The CPC complex has essential functions at the centromere in ensuring correct chromosome alignment and segregation and is required for chromatin-induced microtubule stabilization and spindle assembly (By similarity).</text>
</comment>
<comment type="subunit">
    <text evidence="1">Component of the CPC complex.</text>
</comment>
<comment type="subcellular location">
    <subcellularLocation>
        <location evidence="1">Nucleus</location>
    </subcellularLocation>
    <subcellularLocation>
        <location evidence="1">Chromosome</location>
        <location evidence="1">Centromere</location>
    </subcellularLocation>
    <subcellularLocation>
        <location evidence="1">Cytoplasm</location>
        <location evidence="1">Cytoskeleton</location>
        <location evidence="1">Spindle</location>
    </subcellularLocation>
    <text evidence="1">Localizes on chromosome arms and inner centromeres from prophase through metaphase and then transferring to the spindle midzone and midbody from anaphase through cytokinesis.</text>
</comment>
<comment type="similarity">
    <text evidence="3">Belongs to the borealin family.</text>
</comment>